<sequence>MSRTIFCTFLKKDAERQDFQLYPGEIGKRIYNEISKEAWSQWITKQTMLINEKKLSMMNIEDRKLLEQEMVNFLFEGQDVHIAGYTPPSK</sequence>
<organism>
    <name type="scientific">Yersinia pestis bv. Antiqua (strain Antiqua)</name>
    <dbReference type="NCBI Taxonomy" id="360102"/>
    <lineage>
        <taxon>Bacteria</taxon>
        <taxon>Pseudomonadati</taxon>
        <taxon>Pseudomonadota</taxon>
        <taxon>Gammaproteobacteria</taxon>
        <taxon>Enterobacterales</taxon>
        <taxon>Yersiniaceae</taxon>
        <taxon>Yersinia</taxon>
    </lineage>
</organism>
<name>FETP_YERPA</name>
<accession>Q1CB93</accession>
<protein>
    <recommendedName>
        <fullName evidence="1">Probable Fe(2+)-trafficking protein</fullName>
    </recommendedName>
</protein>
<feature type="chain" id="PRO_1000045075" description="Probable Fe(2+)-trafficking protein">
    <location>
        <begin position="1"/>
        <end position="90"/>
    </location>
</feature>
<dbReference type="EMBL" id="CP000308">
    <property type="protein sequence ID" value="ABG12279.1"/>
    <property type="molecule type" value="Genomic_DNA"/>
</dbReference>
<dbReference type="RefSeq" id="WP_002209994.1">
    <property type="nucleotide sequence ID" value="NZ_CP009906.1"/>
</dbReference>
<dbReference type="SMR" id="Q1CB93"/>
<dbReference type="KEGG" id="ypa:YPA_0311"/>
<dbReference type="Proteomes" id="UP000001971">
    <property type="component" value="Chromosome"/>
</dbReference>
<dbReference type="GO" id="GO:0005829">
    <property type="term" value="C:cytosol"/>
    <property type="evidence" value="ECO:0007669"/>
    <property type="project" value="TreeGrafter"/>
</dbReference>
<dbReference type="GO" id="GO:0005506">
    <property type="term" value="F:iron ion binding"/>
    <property type="evidence" value="ECO:0007669"/>
    <property type="project" value="UniProtKB-UniRule"/>
</dbReference>
<dbReference type="GO" id="GO:0034599">
    <property type="term" value="P:cellular response to oxidative stress"/>
    <property type="evidence" value="ECO:0007669"/>
    <property type="project" value="TreeGrafter"/>
</dbReference>
<dbReference type="FunFam" id="1.10.3880.10:FF:000001">
    <property type="entry name" value="Probable Fe(2+)-trafficking protein"/>
    <property type="match status" value="1"/>
</dbReference>
<dbReference type="Gene3D" id="1.10.3880.10">
    <property type="entry name" value="Fe(II) trafficking protein YggX"/>
    <property type="match status" value="1"/>
</dbReference>
<dbReference type="HAMAP" id="MF_00686">
    <property type="entry name" value="Fe_traffic_YggX"/>
    <property type="match status" value="1"/>
</dbReference>
<dbReference type="InterPro" id="IPR007457">
    <property type="entry name" value="Fe_traffick_prot_YggX"/>
</dbReference>
<dbReference type="InterPro" id="IPR036766">
    <property type="entry name" value="Fe_traffick_prot_YggX_sf"/>
</dbReference>
<dbReference type="NCBIfam" id="NF003817">
    <property type="entry name" value="PRK05408.1"/>
    <property type="match status" value="1"/>
</dbReference>
<dbReference type="PANTHER" id="PTHR36965">
    <property type="entry name" value="FE(2+)-TRAFFICKING PROTEIN-RELATED"/>
    <property type="match status" value="1"/>
</dbReference>
<dbReference type="PANTHER" id="PTHR36965:SF1">
    <property type="entry name" value="FE(2+)-TRAFFICKING PROTEIN-RELATED"/>
    <property type="match status" value="1"/>
</dbReference>
<dbReference type="Pfam" id="PF04362">
    <property type="entry name" value="Iron_traffic"/>
    <property type="match status" value="1"/>
</dbReference>
<dbReference type="PIRSF" id="PIRSF029827">
    <property type="entry name" value="Fe_traffic_YggX"/>
    <property type="match status" value="1"/>
</dbReference>
<dbReference type="SUPFAM" id="SSF111148">
    <property type="entry name" value="YggX-like"/>
    <property type="match status" value="1"/>
</dbReference>
<gene>
    <name type="ordered locus">YPA_0311</name>
</gene>
<comment type="function">
    <text evidence="1">Could be a mediator in iron transactions between iron acquisition and iron-requiring processes, such as synthesis and/or repair of Fe-S clusters in biosynthetic enzymes.</text>
</comment>
<comment type="subunit">
    <text evidence="1">Monomer.</text>
</comment>
<comment type="similarity">
    <text evidence="1">Belongs to the Fe(2+)-trafficking protein family.</text>
</comment>
<evidence type="ECO:0000255" key="1">
    <source>
        <dbReference type="HAMAP-Rule" id="MF_00686"/>
    </source>
</evidence>
<reference key="1">
    <citation type="journal article" date="2006" name="J. Bacteriol.">
        <title>Complete genome sequence of Yersinia pestis strains Antiqua and Nepal516: evidence of gene reduction in an emerging pathogen.</title>
        <authorList>
            <person name="Chain P.S.G."/>
            <person name="Hu P."/>
            <person name="Malfatti S.A."/>
            <person name="Radnedge L."/>
            <person name="Larimer F."/>
            <person name="Vergez L.M."/>
            <person name="Worsham P."/>
            <person name="Chu M.C."/>
            <person name="Andersen G.L."/>
        </authorList>
    </citation>
    <scope>NUCLEOTIDE SEQUENCE [LARGE SCALE GENOMIC DNA]</scope>
    <source>
        <strain>Antiqua</strain>
    </source>
</reference>
<proteinExistence type="inferred from homology"/>
<keyword id="KW-0408">Iron</keyword>